<organism>
    <name type="scientific">Saccharomyces cerevisiae (strain ATCC 204508 / S288c)</name>
    <name type="common">Baker's yeast</name>
    <dbReference type="NCBI Taxonomy" id="559292"/>
    <lineage>
        <taxon>Eukaryota</taxon>
        <taxon>Fungi</taxon>
        <taxon>Dikarya</taxon>
        <taxon>Ascomycota</taxon>
        <taxon>Saccharomycotina</taxon>
        <taxon>Saccharomycetes</taxon>
        <taxon>Saccharomycetales</taxon>
        <taxon>Saccharomycetaceae</taxon>
        <taxon>Saccharomyces</taxon>
    </lineage>
</organism>
<feature type="chain" id="PRO_0000071121" description="DnaJ protein homolog XDJ1">
    <location>
        <begin position="1"/>
        <end position="459"/>
    </location>
</feature>
<feature type="domain" description="J" evidence="1">
    <location>
        <begin position="7"/>
        <end position="79"/>
    </location>
</feature>
<feature type="repeat" description="CXXCXGXG motif">
    <location>
        <begin position="159"/>
        <end position="166"/>
    </location>
</feature>
<feature type="repeat" description="CXXCXGXG motif">
    <location>
        <begin position="181"/>
        <end position="188"/>
    </location>
</feature>
<feature type="repeat" description="CXXCXGXG motif">
    <location>
        <begin position="208"/>
        <end position="215"/>
    </location>
</feature>
<feature type="repeat" description="CXXCXGXG motif">
    <location>
        <begin position="228"/>
        <end position="235"/>
    </location>
</feature>
<feature type="zinc finger region" description="CR-type" evidence="2">
    <location>
        <begin position="146"/>
        <end position="240"/>
    </location>
</feature>
<feature type="sequence conflict" description="In Ref. 1; CAA53962." evidence="7" ref="1">
    <original>D</original>
    <variation>E</variation>
    <location>
        <position position="119"/>
    </location>
</feature>
<feature type="sequence conflict" description="In Ref. 1; CAA53962." evidence="7" ref="1">
    <original>H</original>
    <variation>Y</variation>
    <location>
        <position position="448"/>
    </location>
</feature>
<name>XDJ1_YEAST</name>
<comment type="subcellular location">
    <subcellularLocation>
        <location evidence="3 5 6">Mitochondrion outer membrane</location>
    </subcellularLocation>
</comment>
<comment type="miscellaneous">
    <text evidence="4">Present with 1210 molecules/cell in log phase SD medium.</text>
</comment>
<sequence length="459" mass="51347">MSGSDRGDRLYDVLGVTRDATVQEIKTAYRKLALKHHPDKYVDQDSKEVNEIKFKEITAAYEILSDPEKKSHYDLYGDDNGAASSGGANGFGDEDFMNFFNNFFNNGSHDGNNFPGEYDAYEEGNSTSSKDIDIDISLTLKDLYMGKKLKFDLKRQVICIKCHGSGWKPKRKIHVTHDVECESCAGKGSKERLKRFGPGLVASQWVVCEKCNGKGKYTKRPKNPKNFCPDCAGLGLLSKKEIITVNVAPGHHFNDVITVKGMADEEIDKTTCGDLKFHLTEKQENLEQKQIFLKNFDDGAGEDLYTSITISLSEALTGFEKFLTKTFDDRLLTLSVKPGRVVRPGDTIKIANEGWPILDNPHGRCGDLYVFVHIEFPPDNWFNEKSELLAIKTNLPSSSSCASHATVNTEDDSNLTNNETISNFRIIHTDDLPEGIRPFKPEAQDSAHQKARSSYCCIQ</sequence>
<reference key="1">
    <citation type="journal article" date="1994" name="Gene">
        <title>XDJ1, a gene encoding a novel non-essential DnaJ homologue from Saccharomyces cerevisiae.</title>
        <authorList>
            <person name="Schwarz E."/>
            <person name="Westermann B."/>
            <person name="Caplan A.J."/>
            <person name="Ludwig G."/>
            <person name="Neupert W."/>
        </authorList>
    </citation>
    <scope>NUCLEOTIDE SEQUENCE [GENOMIC DNA]</scope>
    <source>
        <strain>ATCC 24657 / D273-10B</strain>
    </source>
</reference>
<reference key="2">
    <citation type="journal article" date="1997" name="Nature">
        <title>The nucleotide sequence of Saccharomyces cerevisiae chromosome XII.</title>
        <authorList>
            <person name="Johnston M."/>
            <person name="Hillier L.W."/>
            <person name="Riles L."/>
            <person name="Albermann K."/>
            <person name="Andre B."/>
            <person name="Ansorge W."/>
            <person name="Benes V."/>
            <person name="Brueckner M."/>
            <person name="Delius H."/>
            <person name="Dubois E."/>
            <person name="Duesterhoeft A."/>
            <person name="Entian K.-D."/>
            <person name="Floeth M."/>
            <person name="Goffeau A."/>
            <person name="Hebling U."/>
            <person name="Heumann K."/>
            <person name="Heuss-Neitzel D."/>
            <person name="Hilbert H."/>
            <person name="Hilger F."/>
            <person name="Kleine K."/>
            <person name="Koetter P."/>
            <person name="Louis E.J."/>
            <person name="Messenguy F."/>
            <person name="Mewes H.-W."/>
            <person name="Miosga T."/>
            <person name="Moestl D."/>
            <person name="Mueller-Auer S."/>
            <person name="Nentwich U."/>
            <person name="Obermaier B."/>
            <person name="Piravandi E."/>
            <person name="Pohl T.M."/>
            <person name="Portetelle D."/>
            <person name="Purnelle B."/>
            <person name="Rechmann S."/>
            <person name="Rieger M."/>
            <person name="Rinke M."/>
            <person name="Rose M."/>
            <person name="Scharfe M."/>
            <person name="Scherens B."/>
            <person name="Scholler P."/>
            <person name="Schwager C."/>
            <person name="Schwarz S."/>
            <person name="Underwood A.P."/>
            <person name="Urrestarazu L.A."/>
            <person name="Vandenbol M."/>
            <person name="Verhasselt P."/>
            <person name="Vierendeels F."/>
            <person name="Voet M."/>
            <person name="Volckaert G."/>
            <person name="Voss H."/>
            <person name="Wambutt R."/>
            <person name="Wedler E."/>
            <person name="Wedler H."/>
            <person name="Zimmermann F.K."/>
            <person name="Zollner A."/>
            <person name="Hani J."/>
            <person name="Hoheisel J.D."/>
        </authorList>
    </citation>
    <scope>NUCLEOTIDE SEQUENCE [LARGE SCALE GENOMIC DNA]</scope>
    <source>
        <strain>ATCC 204508 / S288c</strain>
    </source>
</reference>
<reference key="3">
    <citation type="journal article" date="2014" name="G3 (Bethesda)">
        <title>The reference genome sequence of Saccharomyces cerevisiae: Then and now.</title>
        <authorList>
            <person name="Engel S.R."/>
            <person name="Dietrich F.S."/>
            <person name="Fisk D.G."/>
            <person name="Binkley G."/>
            <person name="Balakrishnan R."/>
            <person name="Costanzo M.C."/>
            <person name="Dwight S.S."/>
            <person name="Hitz B.C."/>
            <person name="Karra K."/>
            <person name="Nash R.S."/>
            <person name="Weng S."/>
            <person name="Wong E.D."/>
            <person name="Lloyd P."/>
            <person name="Skrzypek M.S."/>
            <person name="Miyasato S.R."/>
            <person name="Simison M."/>
            <person name="Cherry J.M."/>
        </authorList>
    </citation>
    <scope>GENOME REANNOTATION</scope>
    <source>
        <strain>ATCC 204508 / S288c</strain>
    </source>
</reference>
<reference key="4">
    <citation type="journal article" date="2003" name="Nature">
        <title>Global analysis of protein localization in budding yeast.</title>
        <authorList>
            <person name="Huh W.-K."/>
            <person name="Falvo J.V."/>
            <person name="Gerke L.C."/>
            <person name="Carroll A.S."/>
            <person name="Howson R.W."/>
            <person name="Weissman J.S."/>
            <person name="O'Shea E.K."/>
        </authorList>
    </citation>
    <scope>SUBCELLULAR LOCATION [LARGE SCALE ANALYSIS]</scope>
</reference>
<reference key="5">
    <citation type="journal article" date="2003" name="Nature">
        <title>Global analysis of protein expression in yeast.</title>
        <authorList>
            <person name="Ghaemmaghami S."/>
            <person name="Huh W.-K."/>
            <person name="Bower K."/>
            <person name="Howson R.W."/>
            <person name="Belle A."/>
            <person name="Dephoure N."/>
            <person name="O'Shea E.K."/>
            <person name="Weissman J.S."/>
        </authorList>
    </citation>
    <scope>LEVEL OF PROTEIN EXPRESSION [LARGE SCALE ANALYSIS]</scope>
</reference>
<reference key="6">
    <citation type="journal article" date="2006" name="FEBS J.">
        <title>Integral membrane proteins in the mitochondrial outer membrane of Saccharomyces cerevisiae.</title>
        <authorList>
            <person name="Burri L."/>
            <person name="Vascotto K."/>
            <person name="Gentle I.E."/>
            <person name="Chan N.C."/>
            <person name="Beilharz T."/>
            <person name="Stapleton D.I."/>
            <person name="Ramage L."/>
            <person name="Lithgow T."/>
        </authorList>
    </citation>
    <scope>SUBCELLULAR LOCATION</scope>
</reference>
<reference key="7">
    <citation type="journal article" date="2006" name="J. Proteome Res.">
        <title>Toward the complete yeast mitochondrial proteome: multidimensional separation techniques for mitochondrial proteomics.</title>
        <authorList>
            <person name="Reinders J."/>
            <person name="Zahedi R.P."/>
            <person name="Pfanner N."/>
            <person name="Meisinger C."/>
            <person name="Sickmann A."/>
        </authorList>
    </citation>
    <scope>SUBCELLULAR LOCATION [LARGE SCALE ANALYSIS]</scope>
    <scope>IDENTIFICATION BY MASS SPECTROMETRY</scope>
</reference>
<dbReference type="EMBL" id="X76343">
    <property type="protein sequence ID" value="CAA53962.1"/>
    <property type="molecule type" value="Genomic_DNA"/>
</dbReference>
<dbReference type="EMBL" id="U53880">
    <property type="protein sequence ID" value="AAB67594.1"/>
    <property type="molecule type" value="Genomic_DNA"/>
</dbReference>
<dbReference type="EMBL" id="Z73262">
    <property type="protein sequence ID" value="CAA97651.1"/>
    <property type="molecule type" value="Genomic_DNA"/>
</dbReference>
<dbReference type="EMBL" id="BK006945">
    <property type="protein sequence ID" value="DAA09406.1"/>
    <property type="molecule type" value="Genomic_DNA"/>
</dbReference>
<dbReference type="PIR" id="S64924">
    <property type="entry name" value="S64924"/>
</dbReference>
<dbReference type="RefSeq" id="NP_013191.1">
    <property type="nucleotide sequence ID" value="NM_001181977.1"/>
</dbReference>
<dbReference type="SMR" id="P39102"/>
<dbReference type="BioGRID" id="31363">
    <property type="interactions" value="180"/>
</dbReference>
<dbReference type="DIP" id="DIP-990N"/>
<dbReference type="FunCoup" id="P39102">
    <property type="interactions" value="175"/>
</dbReference>
<dbReference type="IntAct" id="P39102">
    <property type="interactions" value="21"/>
</dbReference>
<dbReference type="MINT" id="P39102"/>
<dbReference type="STRING" id="4932.YLR090W"/>
<dbReference type="iPTMnet" id="P39102"/>
<dbReference type="PaxDb" id="4932-YLR090W"/>
<dbReference type="PeptideAtlas" id="P39102"/>
<dbReference type="EnsemblFungi" id="YLR090W_mRNA">
    <property type="protein sequence ID" value="YLR090W"/>
    <property type="gene ID" value="YLR090W"/>
</dbReference>
<dbReference type="GeneID" id="850779"/>
<dbReference type="KEGG" id="sce:YLR090W"/>
<dbReference type="AGR" id="SGD:S000004080"/>
<dbReference type="SGD" id="S000004080">
    <property type="gene designation" value="XDJ1"/>
</dbReference>
<dbReference type="VEuPathDB" id="FungiDB:YLR090W"/>
<dbReference type="eggNOG" id="KOG0712">
    <property type="taxonomic scope" value="Eukaryota"/>
</dbReference>
<dbReference type="HOGENOM" id="CLU_017633_10_0_1"/>
<dbReference type="InParanoid" id="P39102"/>
<dbReference type="OMA" id="THCFKHL"/>
<dbReference type="OrthoDB" id="550424at2759"/>
<dbReference type="BioCyc" id="YEAST:G3O-32240-MONOMER"/>
<dbReference type="Reactome" id="R-SCE-3371497">
    <property type="pathway name" value="HSP90 chaperone cycle for steroid hormone receptors (SHR) in the presence of ligand"/>
</dbReference>
<dbReference type="BioGRID-ORCS" id="850779">
    <property type="hits" value="0 hits in 10 CRISPR screens"/>
</dbReference>
<dbReference type="PRO" id="PR:P39102"/>
<dbReference type="Proteomes" id="UP000002311">
    <property type="component" value="Chromosome XII"/>
</dbReference>
<dbReference type="RNAct" id="P39102">
    <property type="molecule type" value="protein"/>
</dbReference>
<dbReference type="GO" id="GO:0005737">
    <property type="term" value="C:cytoplasm"/>
    <property type="evidence" value="ECO:0000318"/>
    <property type="project" value="GO_Central"/>
</dbReference>
<dbReference type="GO" id="GO:0005741">
    <property type="term" value="C:mitochondrial outer membrane"/>
    <property type="evidence" value="ECO:0000314"/>
    <property type="project" value="SGD"/>
</dbReference>
<dbReference type="GO" id="GO:0005739">
    <property type="term" value="C:mitochondrion"/>
    <property type="evidence" value="ECO:0007005"/>
    <property type="project" value="SGD"/>
</dbReference>
<dbReference type="GO" id="GO:0005634">
    <property type="term" value="C:nucleus"/>
    <property type="evidence" value="ECO:0007005"/>
    <property type="project" value="SGD"/>
</dbReference>
<dbReference type="GO" id="GO:0001671">
    <property type="term" value="F:ATPase activator activity"/>
    <property type="evidence" value="ECO:0000314"/>
    <property type="project" value="SGD"/>
</dbReference>
<dbReference type="GO" id="GO:0030544">
    <property type="term" value="F:Hsp70 protein binding"/>
    <property type="evidence" value="ECO:0007669"/>
    <property type="project" value="InterPro"/>
</dbReference>
<dbReference type="GO" id="GO:0051087">
    <property type="term" value="F:protein-folding chaperone binding"/>
    <property type="evidence" value="ECO:0000318"/>
    <property type="project" value="GO_Central"/>
</dbReference>
<dbReference type="GO" id="GO:0051082">
    <property type="term" value="F:unfolded protein binding"/>
    <property type="evidence" value="ECO:0007669"/>
    <property type="project" value="InterPro"/>
</dbReference>
<dbReference type="GO" id="GO:0008270">
    <property type="term" value="F:zinc ion binding"/>
    <property type="evidence" value="ECO:0007669"/>
    <property type="project" value="UniProtKB-KW"/>
</dbReference>
<dbReference type="GO" id="GO:0006457">
    <property type="term" value="P:protein folding"/>
    <property type="evidence" value="ECO:0000250"/>
    <property type="project" value="SGD"/>
</dbReference>
<dbReference type="GO" id="GO:0030150">
    <property type="term" value="P:protein import into mitochondrial matrix"/>
    <property type="evidence" value="ECO:0000315"/>
    <property type="project" value="SGD"/>
</dbReference>
<dbReference type="GO" id="GO:0042026">
    <property type="term" value="P:protein refolding"/>
    <property type="evidence" value="ECO:0000318"/>
    <property type="project" value="GO_Central"/>
</dbReference>
<dbReference type="CDD" id="cd06257">
    <property type="entry name" value="DnaJ"/>
    <property type="match status" value="1"/>
</dbReference>
<dbReference type="CDD" id="cd10747">
    <property type="entry name" value="DnaJ_C"/>
    <property type="match status" value="1"/>
</dbReference>
<dbReference type="CDD" id="cd10719">
    <property type="entry name" value="DnaJ_zf"/>
    <property type="match status" value="1"/>
</dbReference>
<dbReference type="FunFam" id="2.10.230.10:FF:000001">
    <property type="entry name" value="DnaJ subfamily A member 2"/>
    <property type="match status" value="1"/>
</dbReference>
<dbReference type="Gene3D" id="1.10.287.110">
    <property type="entry name" value="DnaJ domain"/>
    <property type="match status" value="1"/>
</dbReference>
<dbReference type="Gene3D" id="2.10.230.10">
    <property type="entry name" value="Heat shock protein DnaJ, cysteine-rich domain"/>
    <property type="match status" value="1"/>
</dbReference>
<dbReference type="Gene3D" id="2.60.260.20">
    <property type="entry name" value="Urease metallochaperone UreE, N-terminal domain"/>
    <property type="match status" value="2"/>
</dbReference>
<dbReference type="InterPro" id="IPR002939">
    <property type="entry name" value="DnaJ_C"/>
</dbReference>
<dbReference type="InterPro" id="IPR001623">
    <property type="entry name" value="DnaJ_domain"/>
</dbReference>
<dbReference type="InterPro" id="IPR018253">
    <property type="entry name" value="DnaJ_domain_CS"/>
</dbReference>
<dbReference type="InterPro" id="IPR044713">
    <property type="entry name" value="DNJA1/2-like"/>
</dbReference>
<dbReference type="InterPro" id="IPR008971">
    <property type="entry name" value="HSP40/DnaJ_pept-bd"/>
</dbReference>
<dbReference type="InterPro" id="IPR001305">
    <property type="entry name" value="HSP_DnaJ_Cys-rich_dom"/>
</dbReference>
<dbReference type="InterPro" id="IPR036410">
    <property type="entry name" value="HSP_DnaJ_Cys-rich_dom_sf"/>
</dbReference>
<dbReference type="InterPro" id="IPR036869">
    <property type="entry name" value="J_dom_sf"/>
</dbReference>
<dbReference type="PANTHER" id="PTHR43888">
    <property type="entry name" value="DNAJ-LIKE-2, ISOFORM A-RELATED"/>
    <property type="match status" value="1"/>
</dbReference>
<dbReference type="Pfam" id="PF00226">
    <property type="entry name" value="DnaJ"/>
    <property type="match status" value="1"/>
</dbReference>
<dbReference type="Pfam" id="PF01556">
    <property type="entry name" value="DnaJ_C"/>
    <property type="match status" value="1"/>
</dbReference>
<dbReference type="Pfam" id="PF00684">
    <property type="entry name" value="DnaJ_CXXCXGXG"/>
    <property type="match status" value="1"/>
</dbReference>
<dbReference type="PRINTS" id="PR00625">
    <property type="entry name" value="JDOMAIN"/>
</dbReference>
<dbReference type="SMART" id="SM00271">
    <property type="entry name" value="DnaJ"/>
    <property type="match status" value="1"/>
</dbReference>
<dbReference type="SUPFAM" id="SSF46565">
    <property type="entry name" value="Chaperone J-domain"/>
    <property type="match status" value="1"/>
</dbReference>
<dbReference type="SUPFAM" id="SSF57938">
    <property type="entry name" value="DnaJ/Hsp40 cysteine-rich domain"/>
    <property type="match status" value="1"/>
</dbReference>
<dbReference type="SUPFAM" id="SSF49493">
    <property type="entry name" value="HSP40/DnaJ peptide-binding domain"/>
    <property type="match status" value="2"/>
</dbReference>
<dbReference type="PROSITE" id="PS00636">
    <property type="entry name" value="DNAJ_1"/>
    <property type="match status" value="1"/>
</dbReference>
<dbReference type="PROSITE" id="PS50076">
    <property type="entry name" value="DNAJ_2"/>
    <property type="match status" value="1"/>
</dbReference>
<dbReference type="PROSITE" id="PS51188">
    <property type="entry name" value="ZF_CR"/>
    <property type="match status" value="1"/>
</dbReference>
<gene>
    <name type="primary">XDJ1</name>
    <name type="ordered locus">YLR090W</name>
    <name type="ORF">L9449.3</name>
</gene>
<accession>P39102</accession>
<accession>D6VY90</accession>
<accession>Q12014</accession>
<proteinExistence type="evidence at protein level"/>
<keyword id="KW-0143">Chaperone</keyword>
<keyword id="KW-0472">Membrane</keyword>
<keyword id="KW-0479">Metal-binding</keyword>
<keyword id="KW-0496">Mitochondrion</keyword>
<keyword id="KW-1000">Mitochondrion outer membrane</keyword>
<keyword id="KW-1185">Reference proteome</keyword>
<keyword id="KW-0677">Repeat</keyword>
<keyword id="KW-0862">Zinc</keyword>
<keyword id="KW-0863">Zinc-finger</keyword>
<evidence type="ECO:0000255" key="1">
    <source>
        <dbReference type="PROSITE-ProRule" id="PRU00286"/>
    </source>
</evidence>
<evidence type="ECO:0000255" key="2">
    <source>
        <dbReference type="PROSITE-ProRule" id="PRU00546"/>
    </source>
</evidence>
<evidence type="ECO:0000269" key="3">
    <source>
    </source>
</evidence>
<evidence type="ECO:0000269" key="4">
    <source>
    </source>
</evidence>
<evidence type="ECO:0000269" key="5">
    <source>
    </source>
</evidence>
<evidence type="ECO:0000269" key="6">
    <source>
    </source>
</evidence>
<evidence type="ECO:0000305" key="7"/>
<protein>
    <recommendedName>
        <fullName>DnaJ protein homolog XDJ1</fullName>
    </recommendedName>
</protein>